<sequence>MFTSTGSSGLYKAPLSKSLLLVPSALSLLLTLLLPHCQKFFVYDLHAVKHDLQIWRLICGRIICLDLKDAFCSGLLIYNFRIFERRYGSRKFASFLLGSWVLSALFDFILVEAVQYSLGVTVASNLPSGFLAPVFALFVPFHCSIPRVQVAQILGPLSITNKTLIYILGLQLFTSGSYIWIVAMSGLISGMCYDRKVLQVHQVLRIPGRMAEFFSWALEPIFSSSEPTSEARVGMGATVDIQRQQRMEQLDRQLMLSQFAQVRRQRQQQGGMINWNRLFPPLRQRRNINYQDGPRSEQRASPPLEVSEEQVARLMEMGFSRGDALEALRASNNDLNVATNFLLQH</sequence>
<reference key="1">
    <citation type="journal article" date="2005" name="Science">
        <title>The transcriptional landscape of the mammalian genome.</title>
        <authorList>
            <person name="Carninci P."/>
            <person name="Kasukawa T."/>
            <person name="Katayama S."/>
            <person name="Gough J."/>
            <person name="Frith M.C."/>
            <person name="Maeda N."/>
            <person name="Oyama R."/>
            <person name="Ravasi T."/>
            <person name="Lenhard B."/>
            <person name="Wells C."/>
            <person name="Kodzius R."/>
            <person name="Shimokawa K."/>
            <person name="Bajic V.B."/>
            <person name="Brenner S.E."/>
            <person name="Batalov S."/>
            <person name="Forrest A.R."/>
            <person name="Zavolan M."/>
            <person name="Davis M.J."/>
            <person name="Wilming L.G."/>
            <person name="Aidinis V."/>
            <person name="Allen J.E."/>
            <person name="Ambesi-Impiombato A."/>
            <person name="Apweiler R."/>
            <person name="Aturaliya R.N."/>
            <person name="Bailey T.L."/>
            <person name="Bansal M."/>
            <person name="Baxter L."/>
            <person name="Beisel K.W."/>
            <person name="Bersano T."/>
            <person name="Bono H."/>
            <person name="Chalk A.M."/>
            <person name="Chiu K.P."/>
            <person name="Choudhary V."/>
            <person name="Christoffels A."/>
            <person name="Clutterbuck D.R."/>
            <person name="Crowe M.L."/>
            <person name="Dalla E."/>
            <person name="Dalrymple B.P."/>
            <person name="de Bono B."/>
            <person name="Della Gatta G."/>
            <person name="di Bernardo D."/>
            <person name="Down T."/>
            <person name="Engstrom P."/>
            <person name="Fagiolini M."/>
            <person name="Faulkner G."/>
            <person name="Fletcher C.F."/>
            <person name="Fukushima T."/>
            <person name="Furuno M."/>
            <person name="Futaki S."/>
            <person name="Gariboldi M."/>
            <person name="Georgii-Hemming P."/>
            <person name="Gingeras T.R."/>
            <person name="Gojobori T."/>
            <person name="Green R.E."/>
            <person name="Gustincich S."/>
            <person name="Harbers M."/>
            <person name="Hayashi Y."/>
            <person name="Hensch T.K."/>
            <person name="Hirokawa N."/>
            <person name="Hill D."/>
            <person name="Huminiecki L."/>
            <person name="Iacono M."/>
            <person name="Ikeo K."/>
            <person name="Iwama A."/>
            <person name="Ishikawa T."/>
            <person name="Jakt M."/>
            <person name="Kanapin A."/>
            <person name="Katoh M."/>
            <person name="Kawasawa Y."/>
            <person name="Kelso J."/>
            <person name="Kitamura H."/>
            <person name="Kitano H."/>
            <person name="Kollias G."/>
            <person name="Krishnan S.P."/>
            <person name="Kruger A."/>
            <person name="Kummerfeld S.K."/>
            <person name="Kurochkin I.V."/>
            <person name="Lareau L.F."/>
            <person name="Lazarevic D."/>
            <person name="Lipovich L."/>
            <person name="Liu J."/>
            <person name="Liuni S."/>
            <person name="McWilliam S."/>
            <person name="Madan Babu M."/>
            <person name="Madera M."/>
            <person name="Marchionni L."/>
            <person name="Matsuda H."/>
            <person name="Matsuzawa S."/>
            <person name="Miki H."/>
            <person name="Mignone F."/>
            <person name="Miyake S."/>
            <person name="Morris K."/>
            <person name="Mottagui-Tabar S."/>
            <person name="Mulder N."/>
            <person name="Nakano N."/>
            <person name="Nakauchi H."/>
            <person name="Ng P."/>
            <person name="Nilsson R."/>
            <person name="Nishiguchi S."/>
            <person name="Nishikawa S."/>
            <person name="Nori F."/>
            <person name="Ohara O."/>
            <person name="Okazaki Y."/>
            <person name="Orlando V."/>
            <person name="Pang K.C."/>
            <person name="Pavan W.J."/>
            <person name="Pavesi G."/>
            <person name="Pesole G."/>
            <person name="Petrovsky N."/>
            <person name="Piazza S."/>
            <person name="Reed J."/>
            <person name="Reid J.F."/>
            <person name="Ring B.Z."/>
            <person name="Ringwald M."/>
            <person name="Rost B."/>
            <person name="Ruan Y."/>
            <person name="Salzberg S.L."/>
            <person name="Sandelin A."/>
            <person name="Schneider C."/>
            <person name="Schoenbach C."/>
            <person name="Sekiguchi K."/>
            <person name="Semple C.A."/>
            <person name="Seno S."/>
            <person name="Sessa L."/>
            <person name="Sheng Y."/>
            <person name="Shibata Y."/>
            <person name="Shimada H."/>
            <person name="Shimada K."/>
            <person name="Silva D."/>
            <person name="Sinclair B."/>
            <person name="Sperling S."/>
            <person name="Stupka E."/>
            <person name="Sugiura K."/>
            <person name="Sultana R."/>
            <person name="Takenaka Y."/>
            <person name="Taki K."/>
            <person name="Tammoja K."/>
            <person name="Tan S.L."/>
            <person name="Tang S."/>
            <person name="Taylor M.S."/>
            <person name="Tegner J."/>
            <person name="Teichmann S.A."/>
            <person name="Ueda H.R."/>
            <person name="van Nimwegen E."/>
            <person name="Verardo R."/>
            <person name="Wei C.L."/>
            <person name="Yagi K."/>
            <person name="Yamanishi H."/>
            <person name="Zabarovsky E."/>
            <person name="Zhu S."/>
            <person name="Zimmer A."/>
            <person name="Hide W."/>
            <person name="Bult C."/>
            <person name="Grimmond S.M."/>
            <person name="Teasdale R.D."/>
            <person name="Liu E.T."/>
            <person name="Brusic V."/>
            <person name="Quackenbush J."/>
            <person name="Wahlestedt C."/>
            <person name="Mattick J.S."/>
            <person name="Hume D.A."/>
            <person name="Kai C."/>
            <person name="Sasaki D."/>
            <person name="Tomaru Y."/>
            <person name="Fukuda S."/>
            <person name="Kanamori-Katayama M."/>
            <person name="Suzuki M."/>
            <person name="Aoki J."/>
            <person name="Arakawa T."/>
            <person name="Iida J."/>
            <person name="Imamura K."/>
            <person name="Itoh M."/>
            <person name="Kato T."/>
            <person name="Kawaji H."/>
            <person name="Kawagashira N."/>
            <person name="Kawashima T."/>
            <person name="Kojima M."/>
            <person name="Kondo S."/>
            <person name="Konno H."/>
            <person name="Nakano K."/>
            <person name="Ninomiya N."/>
            <person name="Nishio T."/>
            <person name="Okada M."/>
            <person name="Plessy C."/>
            <person name="Shibata K."/>
            <person name="Shiraki T."/>
            <person name="Suzuki S."/>
            <person name="Tagami M."/>
            <person name="Waki K."/>
            <person name="Watahiki A."/>
            <person name="Okamura-Oho Y."/>
            <person name="Suzuki H."/>
            <person name="Kawai J."/>
            <person name="Hayashizaki Y."/>
        </authorList>
    </citation>
    <scope>NUCLEOTIDE SEQUENCE [LARGE SCALE MRNA]</scope>
    <source>
        <strain>C57BL/6J</strain>
        <tissue>Inner ear</tissue>
    </source>
</reference>
<reference key="2">
    <citation type="journal article" date="2004" name="Genome Res.">
        <title>The status, quality, and expansion of the NIH full-length cDNA project: the Mammalian Gene Collection (MGC).</title>
        <authorList>
            <consortium name="The MGC Project Team"/>
        </authorList>
    </citation>
    <scope>NUCLEOTIDE SEQUENCE [LARGE SCALE MRNA]</scope>
    <source>
        <strain>FVB/N</strain>
        <tissue>Kidney</tissue>
    </source>
</reference>
<reference key="3">
    <citation type="journal article" date="2010" name="Cell">
        <title>A tissue-specific atlas of mouse protein phosphorylation and expression.</title>
        <authorList>
            <person name="Huttlin E.L."/>
            <person name="Jedrychowski M.P."/>
            <person name="Elias J.E."/>
            <person name="Goswami T."/>
            <person name="Rad R."/>
            <person name="Beausoleil S.A."/>
            <person name="Villen J."/>
            <person name="Haas W."/>
            <person name="Sowa M.E."/>
            <person name="Gygi S.P."/>
        </authorList>
    </citation>
    <scope>IDENTIFICATION BY MASS SPECTROMETRY [LARGE SCALE ANALYSIS]</scope>
    <source>
        <tissue>Testis</tissue>
    </source>
</reference>
<reference key="4">
    <citation type="journal article" date="2019" name="Science">
        <title>LMBR1L regulates lymphopoiesis through Wnt/beta-catenin signaling.</title>
        <authorList>
            <person name="Choi J.H."/>
            <person name="Zhong X."/>
            <person name="McAlpine W."/>
            <person name="Liao T.C."/>
            <person name="Zhang D."/>
            <person name="Fang B."/>
            <person name="Russell J."/>
            <person name="Ludwig S."/>
            <person name="Nair-Gill E."/>
            <person name="Zhang Z."/>
            <person name="Wang K.W."/>
            <person name="Misawa T."/>
            <person name="Zhan X."/>
            <person name="Choi M."/>
            <person name="Wang T."/>
            <person name="Li X."/>
            <person name="Tang M."/>
            <person name="Sun Q."/>
            <person name="Yu L."/>
            <person name="Murray A.R."/>
            <person name="Moresco E.M.Y."/>
            <person name="Beutler B."/>
        </authorList>
    </citation>
    <scope>FUNCTION</scope>
    <scope>INTERACTION WITH LMBR1L; FAF2; AMFR AND VCP</scope>
</reference>
<protein>
    <recommendedName>
        <fullName>Ubiquitin-associated domain-containing protein 2</fullName>
        <shortName>UBA domain-containing protein 2</shortName>
    </recommendedName>
    <alternativeName>
        <fullName>Phosphoglycerate dehydrogenase-like protein 1</fullName>
    </alternativeName>
</protein>
<evidence type="ECO:0000250" key="1">
    <source>
        <dbReference type="UniProtKB" id="Q8NBM4"/>
    </source>
</evidence>
<evidence type="ECO:0000255" key="2"/>
<evidence type="ECO:0000255" key="3">
    <source>
        <dbReference type="PROSITE-ProRule" id="PRU00212"/>
    </source>
</evidence>
<evidence type="ECO:0000256" key="4">
    <source>
        <dbReference type="SAM" id="MobiDB-lite"/>
    </source>
</evidence>
<evidence type="ECO:0000269" key="5">
    <source>
    </source>
</evidence>
<proteinExistence type="evidence at protein level"/>
<name>UBAC2_MOUSE</name>
<dbReference type="EMBL" id="AK049109">
    <property type="protein sequence ID" value="BAC33546.1"/>
    <property type="molecule type" value="mRNA"/>
</dbReference>
<dbReference type="EMBL" id="AK158177">
    <property type="protein sequence ID" value="BAE34394.1"/>
    <property type="molecule type" value="mRNA"/>
</dbReference>
<dbReference type="EMBL" id="AK159755">
    <property type="protein sequence ID" value="BAE35346.1"/>
    <property type="molecule type" value="mRNA"/>
</dbReference>
<dbReference type="EMBL" id="BC024467">
    <property type="protein sequence ID" value="AAH24467.1"/>
    <property type="molecule type" value="mRNA"/>
</dbReference>
<dbReference type="CCDS" id="CCDS37019.1"/>
<dbReference type="RefSeq" id="NP_081137.2">
    <property type="nucleotide sequence ID" value="NM_026861.2"/>
</dbReference>
<dbReference type="SMR" id="Q8R1K1"/>
<dbReference type="BioGRID" id="213101">
    <property type="interactions" value="7"/>
</dbReference>
<dbReference type="FunCoup" id="Q8R1K1">
    <property type="interactions" value="1944"/>
</dbReference>
<dbReference type="STRING" id="10090.ENSMUSP00000043245"/>
<dbReference type="GlyCosmos" id="Q8R1K1">
    <property type="glycosylation" value="1 site, No reported glycans"/>
</dbReference>
<dbReference type="GlyGen" id="Q8R1K1">
    <property type="glycosylation" value="1 site"/>
</dbReference>
<dbReference type="iPTMnet" id="Q8R1K1"/>
<dbReference type="PhosphoSitePlus" id="Q8R1K1"/>
<dbReference type="SwissPalm" id="Q8R1K1"/>
<dbReference type="PaxDb" id="10090-ENSMUSP00000043245"/>
<dbReference type="PeptideAtlas" id="Q8R1K1"/>
<dbReference type="ProteomicsDB" id="298058"/>
<dbReference type="Pumba" id="Q8R1K1"/>
<dbReference type="Antibodypedia" id="10857">
    <property type="antibodies" value="99 antibodies from 20 providers"/>
</dbReference>
<dbReference type="Ensembl" id="ENSMUST00000039803.7">
    <property type="protein sequence ID" value="ENSMUSP00000043245.6"/>
    <property type="gene ID" value="ENSMUSG00000041765.7"/>
</dbReference>
<dbReference type="GeneID" id="68889"/>
<dbReference type="KEGG" id="mmu:68889"/>
<dbReference type="UCSC" id="uc007vao.1">
    <property type="organism name" value="mouse"/>
</dbReference>
<dbReference type="AGR" id="MGI:1916139"/>
<dbReference type="CTD" id="337867"/>
<dbReference type="MGI" id="MGI:1916139">
    <property type="gene designation" value="Ubac2"/>
</dbReference>
<dbReference type="VEuPathDB" id="HostDB:ENSMUSG00000041765"/>
<dbReference type="eggNOG" id="KOG4463">
    <property type="taxonomic scope" value="Eukaryota"/>
</dbReference>
<dbReference type="GeneTree" id="ENSGT00950000182999"/>
<dbReference type="HOGENOM" id="CLU_057710_0_0_1"/>
<dbReference type="InParanoid" id="Q8R1K1"/>
<dbReference type="OMA" id="NYQDHRP"/>
<dbReference type="OrthoDB" id="272778at2759"/>
<dbReference type="PhylomeDB" id="Q8R1K1"/>
<dbReference type="TreeFam" id="TF333335"/>
<dbReference type="BRENDA" id="4.2.3.134">
    <property type="organism ID" value="3474"/>
</dbReference>
<dbReference type="BioGRID-ORCS" id="68889">
    <property type="hits" value="3 hits in 79 CRISPR screens"/>
</dbReference>
<dbReference type="ChiTaRS" id="Ubac2">
    <property type="organism name" value="mouse"/>
</dbReference>
<dbReference type="PRO" id="PR:Q8R1K1"/>
<dbReference type="Proteomes" id="UP000000589">
    <property type="component" value="Chromosome 14"/>
</dbReference>
<dbReference type="RNAct" id="Q8R1K1">
    <property type="molecule type" value="protein"/>
</dbReference>
<dbReference type="Bgee" id="ENSMUSG00000041765">
    <property type="expression patterns" value="Expressed in gastrula and 256 other cell types or tissues"/>
</dbReference>
<dbReference type="ExpressionAtlas" id="Q8R1K1">
    <property type="expression patterns" value="baseline and differential"/>
</dbReference>
<dbReference type="GO" id="GO:0005783">
    <property type="term" value="C:endoplasmic reticulum"/>
    <property type="evidence" value="ECO:0000266"/>
    <property type="project" value="MGI"/>
</dbReference>
<dbReference type="GO" id="GO:0005789">
    <property type="term" value="C:endoplasmic reticulum membrane"/>
    <property type="evidence" value="ECO:0007669"/>
    <property type="project" value="UniProtKB-SubCell"/>
</dbReference>
<dbReference type="GO" id="GO:0090090">
    <property type="term" value="P:negative regulation of canonical Wnt signaling pathway"/>
    <property type="evidence" value="ECO:0000315"/>
    <property type="project" value="UniProtKB"/>
</dbReference>
<dbReference type="GO" id="GO:1904153">
    <property type="term" value="P:negative regulation of retrograde protein transport, ER to cytosol"/>
    <property type="evidence" value="ECO:0007669"/>
    <property type="project" value="Ensembl"/>
</dbReference>
<dbReference type="GO" id="GO:0070972">
    <property type="term" value="P:protein localization to endoplasmic reticulum"/>
    <property type="evidence" value="ECO:0000266"/>
    <property type="project" value="MGI"/>
</dbReference>
<dbReference type="GO" id="GO:0016055">
    <property type="term" value="P:Wnt signaling pathway"/>
    <property type="evidence" value="ECO:0007669"/>
    <property type="project" value="UniProtKB-KW"/>
</dbReference>
<dbReference type="CDD" id="cd14305">
    <property type="entry name" value="UBA_UBAC2"/>
    <property type="match status" value="1"/>
</dbReference>
<dbReference type="FunFam" id="1.10.8.10:FF:000074">
    <property type="entry name" value="Ubiquitin-associated domain-containing protein 2"/>
    <property type="match status" value="1"/>
</dbReference>
<dbReference type="Gene3D" id="1.10.8.10">
    <property type="entry name" value="DNA helicase RuvA subunit, C-terminal domain"/>
    <property type="match status" value="1"/>
</dbReference>
<dbReference type="Gene3D" id="1.20.1540.10">
    <property type="entry name" value="Rhomboid-like"/>
    <property type="match status" value="1"/>
</dbReference>
<dbReference type="InterPro" id="IPR035952">
    <property type="entry name" value="Rhomboid-like_sf"/>
</dbReference>
<dbReference type="InterPro" id="IPR015940">
    <property type="entry name" value="UBA"/>
</dbReference>
<dbReference type="InterPro" id="IPR009060">
    <property type="entry name" value="UBA-like_sf"/>
</dbReference>
<dbReference type="InterPro" id="IPR041928">
    <property type="entry name" value="UBA_UBAC2"/>
</dbReference>
<dbReference type="PANTHER" id="PTHR43066">
    <property type="entry name" value="RHOMBOID-RELATED PROTEIN"/>
    <property type="match status" value="1"/>
</dbReference>
<dbReference type="PANTHER" id="PTHR43066:SF21">
    <property type="entry name" value="UBIQUITIN-ASSOCIATED DOMAIN-CONTAINING PROTEIN 2"/>
    <property type="match status" value="1"/>
</dbReference>
<dbReference type="Pfam" id="PF00627">
    <property type="entry name" value="UBA"/>
    <property type="match status" value="1"/>
</dbReference>
<dbReference type="SMART" id="SM00165">
    <property type="entry name" value="UBA"/>
    <property type="match status" value="1"/>
</dbReference>
<dbReference type="SUPFAM" id="SSF144091">
    <property type="entry name" value="Rhomboid-like"/>
    <property type="match status" value="1"/>
</dbReference>
<dbReference type="SUPFAM" id="SSF46934">
    <property type="entry name" value="UBA-like"/>
    <property type="match status" value="1"/>
</dbReference>
<dbReference type="PROSITE" id="PS50030">
    <property type="entry name" value="UBA"/>
    <property type="match status" value="1"/>
</dbReference>
<keyword id="KW-0256">Endoplasmic reticulum</keyword>
<keyword id="KW-0325">Glycoprotein</keyword>
<keyword id="KW-0472">Membrane</keyword>
<keyword id="KW-1185">Reference proteome</keyword>
<keyword id="KW-0732">Signal</keyword>
<keyword id="KW-0812">Transmembrane</keyword>
<keyword id="KW-1133">Transmembrane helix</keyword>
<keyword id="KW-0879">Wnt signaling pathway</keyword>
<accession>Q8R1K1</accession>
<accession>Q3TWC0</accession>
<feature type="signal peptide" evidence="2">
    <location>
        <begin position="1"/>
        <end position="39"/>
    </location>
</feature>
<feature type="chain" id="PRO_0000280756" description="Ubiquitin-associated domain-containing protein 2">
    <location>
        <begin position="40"/>
        <end position="345"/>
    </location>
</feature>
<feature type="topological domain" description="Extracellular" evidence="2">
    <location>
        <begin position="40"/>
        <end position="91"/>
    </location>
</feature>
<feature type="transmembrane region" description="Helical" evidence="2">
    <location>
        <begin position="92"/>
        <end position="112"/>
    </location>
</feature>
<feature type="topological domain" description="Cytoplasmic" evidence="2">
    <location>
        <begin position="113"/>
        <end position="125"/>
    </location>
</feature>
<feature type="transmembrane region" description="Helical" evidence="2">
    <location>
        <begin position="126"/>
        <end position="146"/>
    </location>
</feature>
<feature type="topological domain" description="Extracellular" evidence="2">
    <location>
        <begin position="147"/>
        <end position="163"/>
    </location>
</feature>
<feature type="transmembrane region" description="Helical" evidence="2">
    <location>
        <begin position="164"/>
        <end position="184"/>
    </location>
</feature>
<feature type="topological domain" description="Cytoplasmic" evidence="2">
    <location>
        <begin position="185"/>
        <end position="345"/>
    </location>
</feature>
<feature type="domain" description="UBA" evidence="3">
    <location>
        <begin position="305"/>
        <end position="345"/>
    </location>
</feature>
<feature type="region of interest" description="Disordered" evidence="4">
    <location>
        <begin position="287"/>
        <end position="306"/>
    </location>
</feature>
<feature type="glycosylation site" description="N-linked (GlcNAc...) asparagine" evidence="2">
    <location>
        <position position="161"/>
    </location>
</feature>
<gene>
    <name type="primary">Ubac2</name>
    <name type="synonym">Phgdhl1</name>
</gene>
<organism>
    <name type="scientific">Mus musculus</name>
    <name type="common">Mouse</name>
    <dbReference type="NCBI Taxonomy" id="10090"/>
    <lineage>
        <taxon>Eukaryota</taxon>
        <taxon>Metazoa</taxon>
        <taxon>Chordata</taxon>
        <taxon>Craniata</taxon>
        <taxon>Vertebrata</taxon>
        <taxon>Euteleostomi</taxon>
        <taxon>Mammalia</taxon>
        <taxon>Eutheria</taxon>
        <taxon>Euarchontoglires</taxon>
        <taxon>Glires</taxon>
        <taxon>Rodentia</taxon>
        <taxon>Myomorpha</taxon>
        <taxon>Muroidea</taxon>
        <taxon>Muridae</taxon>
        <taxon>Murinae</taxon>
        <taxon>Mus</taxon>
        <taxon>Mus</taxon>
    </lineage>
</organism>
<comment type="function">
    <text evidence="1 5">Restricts trafficking of FAF2 from the endoplasmic reticulum to lipid droplets (By similarity). In association with LMBR1L and E3 ubiquitin-protein ligase AMFR, negatively regulates the canonical Wnt signaling pathway in the lymphocytes by promoting the ubiquitin-mediated degradation of CTNNB1 and Wnt receptors FZD6 and LRP6 (PubMed:31073040).</text>
</comment>
<comment type="subunit">
    <text evidence="5">Interacts with LMBR1L, FAF2, AMFR and VCP.</text>
</comment>
<comment type="subcellular location">
    <subcellularLocation>
        <location evidence="1">Endoplasmic reticulum membrane</location>
        <topology evidence="2">Multi-pass membrane protein</topology>
    </subcellularLocation>
</comment>